<proteinExistence type="inferred from homology"/>
<feature type="chain" id="PRO_0000240102" description="NADH-quinone oxidoreductase subunit H">
    <location>
        <begin position="1"/>
        <end position="335"/>
    </location>
</feature>
<feature type="transmembrane region" description="Helical" evidence="1">
    <location>
        <begin position="12"/>
        <end position="32"/>
    </location>
</feature>
<feature type="transmembrane region" description="Helical" evidence="1">
    <location>
        <begin position="81"/>
        <end position="101"/>
    </location>
</feature>
<feature type="transmembrane region" description="Helical" evidence="1">
    <location>
        <begin position="114"/>
        <end position="134"/>
    </location>
</feature>
<feature type="transmembrane region" description="Helical" evidence="1">
    <location>
        <begin position="154"/>
        <end position="174"/>
    </location>
</feature>
<feature type="transmembrane region" description="Helical" evidence="1">
    <location>
        <begin position="187"/>
        <end position="207"/>
    </location>
</feature>
<feature type="transmembrane region" description="Helical" evidence="1">
    <location>
        <begin position="238"/>
        <end position="258"/>
    </location>
</feature>
<feature type="transmembrane region" description="Helical" evidence="1">
    <location>
        <begin position="270"/>
        <end position="290"/>
    </location>
</feature>
<feature type="transmembrane region" description="Helical" evidence="1">
    <location>
        <begin position="307"/>
        <end position="327"/>
    </location>
</feature>
<evidence type="ECO:0000255" key="1">
    <source>
        <dbReference type="HAMAP-Rule" id="MF_01350"/>
    </source>
</evidence>
<gene>
    <name evidence="1" type="primary">nuoH</name>
    <name type="ordered locus">Psyr_3203</name>
</gene>
<name>NUOH_PSEU2</name>
<reference key="1">
    <citation type="journal article" date="2005" name="Proc. Natl. Acad. Sci. U.S.A.">
        <title>Comparison of the complete genome sequences of Pseudomonas syringae pv. syringae B728a and pv. tomato DC3000.</title>
        <authorList>
            <person name="Feil H."/>
            <person name="Feil W.S."/>
            <person name="Chain P."/>
            <person name="Larimer F."/>
            <person name="Dibartolo G."/>
            <person name="Copeland A."/>
            <person name="Lykidis A."/>
            <person name="Trong S."/>
            <person name="Nolan M."/>
            <person name="Goltsman E."/>
            <person name="Thiel J."/>
            <person name="Malfatti S."/>
            <person name="Loper J.E."/>
            <person name="Lapidus A."/>
            <person name="Detter J.C."/>
            <person name="Land M."/>
            <person name="Richardson P.M."/>
            <person name="Kyrpides N.C."/>
            <person name="Ivanova N."/>
            <person name="Lindow S.E."/>
        </authorList>
    </citation>
    <scope>NUCLEOTIDE SEQUENCE [LARGE SCALE GENOMIC DNA]</scope>
    <source>
        <strain>B728a</strain>
    </source>
</reference>
<organism>
    <name type="scientific">Pseudomonas syringae pv. syringae (strain B728a)</name>
    <dbReference type="NCBI Taxonomy" id="205918"/>
    <lineage>
        <taxon>Bacteria</taxon>
        <taxon>Pseudomonadati</taxon>
        <taxon>Pseudomonadota</taxon>
        <taxon>Gammaproteobacteria</taxon>
        <taxon>Pseudomonadales</taxon>
        <taxon>Pseudomonadaceae</taxon>
        <taxon>Pseudomonas</taxon>
        <taxon>Pseudomonas syringae</taxon>
    </lineage>
</organism>
<protein>
    <recommendedName>
        <fullName evidence="1">NADH-quinone oxidoreductase subunit H</fullName>
        <ecNumber evidence="1">7.1.1.-</ecNumber>
    </recommendedName>
    <alternativeName>
        <fullName evidence="1">NADH dehydrogenase I subunit H</fullName>
    </alternativeName>
    <alternativeName>
        <fullName evidence="1">NDH-1 subunit H</fullName>
    </alternativeName>
</protein>
<sequence length="335" mass="37457">MTWFTPDVIDAIIAVVKAIVVLLAVVVCGALLSFIERRLLGWWQDRYGPNRVGPFGMFQIAADMLKMFFKEDWTPPFADKVIFTLAPVVAMSALLIAFAVIPITPTWGVADLNIGLLFFFAMAGLSVYAVLFAGWSSNNKFALLGSLRASAQTVSYEVFMGLALMGIVVQVGSFNMRDIVEYQAQNLWFIIPQFFGFCTFFIAGVAVTHRHPFDQPEAEQELADGYHIEYAGMKWGMFFVGEYIGIILISALLVTLFFGGWHGPFDILPSLAFFWFALKTAFFIMLFILLRASIPRPRYDQVMDFSWKFCLPLTLINLLVTAAIVLLNTPAGSVQ</sequence>
<dbReference type="EC" id="7.1.1.-" evidence="1"/>
<dbReference type="EMBL" id="CP000075">
    <property type="protein sequence ID" value="AAY38235.1"/>
    <property type="molecule type" value="Genomic_DNA"/>
</dbReference>
<dbReference type="RefSeq" id="WP_003371726.1">
    <property type="nucleotide sequence ID" value="NC_007005.1"/>
</dbReference>
<dbReference type="RefSeq" id="YP_236273.1">
    <property type="nucleotide sequence ID" value="NC_007005.1"/>
</dbReference>
<dbReference type="SMR" id="Q4ZRI7"/>
<dbReference type="STRING" id="205918.Psyr_3203"/>
<dbReference type="GeneID" id="96219670"/>
<dbReference type="KEGG" id="psb:Psyr_3203"/>
<dbReference type="PATRIC" id="fig|205918.7.peg.3270"/>
<dbReference type="eggNOG" id="COG1005">
    <property type="taxonomic scope" value="Bacteria"/>
</dbReference>
<dbReference type="HOGENOM" id="CLU_015134_0_1_6"/>
<dbReference type="OrthoDB" id="9803734at2"/>
<dbReference type="Proteomes" id="UP000000426">
    <property type="component" value="Chromosome"/>
</dbReference>
<dbReference type="GO" id="GO:0005886">
    <property type="term" value="C:plasma membrane"/>
    <property type="evidence" value="ECO:0007669"/>
    <property type="project" value="UniProtKB-SubCell"/>
</dbReference>
<dbReference type="GO" id="GO:0003954">
    <property type="term" value="F:NADH dehydrogenase activity"/>
    <property type="evidence" value="ECO:0007669"/>
    <property type="project" value="TreeGrafter"/>
</dbReference>
<dbReference type="GO" id="GO:0016655">
    <property type="term" value="F:oxidoreductase activity, acting on NAD(P)H, quinone or similar compound as acceptor"/>
    <property type="evidence" value="ECO:0007669"/>
    <property type="project" value="UniProtKB-UniRule"/>
</dbReference>
<dbReference type="GO" id="GO:0048038">
    <property type="term" value="F:quinone binding"/>
    <property type="evidence" value="ECO:0007669"/>
    <property type="project" value="UniProtKB-KW"/>
</dbReference>
<dbReference type="GO" id="GO:0009060">
    <property type="term" value="P:aerobic respiration"/>
    <property type="evidence" value="ECO:0007669"/>
    <property type="project" value="TreeGrafter"/>
</dbReference>
<dbReference type="HAMAP" id="MF_01350">
    <property type="entry name" value="NDH1_NuoH"/>
    <property type="match status" value="1"/>
</dbReference>
<dbReference type="InterPro" id="IPR001694">
    <property type="entry name" value="NADH_UbQ_OxRdtase_su1/FPO"/>
</dbReference>
<dbReference type="InterPro" id="IPR018086">
    <property type="entry name" value="NADH_UbQ_OxRdtase_su1_CS"/>
</dbReference>
<dbReference type="NCBIfam" id="NF004740">
    <property type="entry name" value="PRK06076.1-1"/>
    <property type="match status" value="1"/>
</dbReference>
<dbReference type="NCBIfam" id="NF004741">
    <property type="entry name" value="PRK06076.1-2"/>
    <property type="match status" value="1"/>
</dbReference>
<dbReference type="PANTHER" id="PTHR11432">
    <property type="entry name" value="NADH DEHYDROGENASE SUBUNIT 1"/>
    <property type="match status" value="1"/>
</dbReference>
<dbReference type="PANTHER" id="PTHR11432:SF3">
    <property type="entry name" value="NADH-UBIQUINONE OXIDOREDUCTASE CHAIN 1"/>
    <property type="match status" value="1"/>
</dbReference>
<dbReference type="Pfam" id="PF00146">
    <property type="entry name" value="NADHdh"/>
    <property type="match status" value="1"/>
</dbReference>
<dbReference type="PROSITE" id="PS00667">
    <property type="entry name" value="COMPLEX1_ND1_1"/>
    <property type="match status" value="1"/>
</dbReference>
<dbReference type="PROSITE" id="PS00668">
    <property type="entry name" value="COMPLEX1_ND1_2"/>
    <property type="match status" value="1"/>
</dbReference>
<accession>Q4ZRI7</accession>
<comment type="function">
    <text evidence="1">NDH-1 shuttles electrons from NADH, via FMN and iron-sulfur (Fe-S) centers, to quinones in the respiratory chain. The immediate electron acceptor for the enzyme in this species is believed to be ubiquinone. Couples the redox reaction to proton translocation (for every two electrons transferred, four hydrogen ions are translocated across the cytoplasmic membrane), and thus conserves the redox energy in a proton gradient. This subunit may bind ubiquinone.</text>
</comment>
<comment type="catalytic activity">
    <reaction evidence="1">
        <text>a quinone + NADH + 5 H(+)(in) = a quinol + NAD(+) + 4 H(+)(out)</text>
        <dbReference type="Rhea" id="RHEA:57888"/>
        <dbReference type="ChEBI" id="CHEBI:15378"/>
        <dbReference type="ChEBI" id="CHEBI:24646"/>
        <dbReference type="ChEBI" id="CHEBI:57540"/>
        <dbReference type="ChEBI" id="CHEBI:57945"/>
        <dbReference type="ChEBI" id="CHEBI:132124"/>
    </reaction>
</comment>
<comment type="subunit">
    <text evidence="1">NDH-1 is composed of 13 different subunits. Subunits NuoA, H, J, K, L, M, N constitute the membrane sector of the complex.</text>
</comment>
<comment type="subcellular location">
    <subcellularLocation>
        <location evidence="1">Cell inner membrane</location>
        <topology evidence="1">Multi-pass membrane protein</topology>
    </subcellularLocation>
</comment>
<comment type="similarity">
    <text evidence="1">Belongs to the complex I subunit 1 family.</text>
</comment>
<keyword id="KW-0997">Cell inner membrane</keyword>
<keyword id="KW-1003">Cell membrane</keyword>
<keyword id="KW-0472">Membrane</keyword>
<keyword id="KW-0520">NAD</keyword>
<keyword id="KW-0874">Quinone</keyword>
<keyword id="KW-1278">Translocase</keyword>
<keyword id="KW-0812">Transmembrane</keyword>
<keyword id="KW-1133">Transmembrane helix</keyword>
<keyword id="KW-0830">Ubiquinone</keyword>